<accession>Q5X427</accession>
<keyword id="KW-0378">Hydrolase</keyword>
<organism>
    <name type="scientific">Legionella pneumophila (strain Paris)</name>
    <dbReference type="NCBI Taxonomy" id="297246"/>
    <lineage>
        <taxon>Bacteria</taxon>
        <taxon>Pseudomonadati</taxon>
        <taxon>Pseudomonadota</taxon>
        <taxon>Gammaproteobacteria</taxon>
        <taxon>Legionellales</taxon>
        <taxon>Legionellaceae</taxon>
        <taxon>Legionella</taxon>
    </lineage>
</organism>
<protein>
    <recommendedName>
        <fullName>Acylphosphatase</fullName>
        <ecNumber>3.6.1.7</ecNumber>
    </recommendedName>
    <alternativeName>
        <fullName>Acylphosphate phosphohydrolase</fullName>
    </alternativeName>
</protein>
<comment type="catalytic activity">
    <reaction>
        <text>an acyl phosphate + H2O = a carboxylate + phosphate + H(+)</text>
        <dbReference type="Rhea" id="RHEA:14965"/>
        <dbReference type="ChEBI" id="CHEBI:15377"/>
        <dbReference type="ChEBI" id="CHEBI:15378"/>
        <dbReference type="ChEBI" id="CHEBI:29067"/>
        <dbReference type="ChEBI" id="CHEBI:43474"/>
        <dbReference type="ChEBI" id="CHEBI:59918"/>
        <dbReference type="EC" id="3.6.1.7"/>
    </reaction>
</comment>
<comment type="similarity">
    <text evidence="2">Belongs to the acylphosphatase family.</text>
</comment>
<reference key="1">
    <citation type="journal article" date="2004" name="Nat. Genet.">
        <title>Evidence in the Legionella pneumophila genome for exploitation of host cell functions and high genome plasticity.</title>
        <authorList>
            <person name="Cazalet C."/>
            <person name="Rusniok C."/>
            <person name="Brueggemann H."/>
            <person name="Zidane N."/>
            <person name="Magnier A."/>
            <person name="Ma L."/>
            <person name="Tichit M."/>
            <person name="Jarraud S."/>
            <person name="Bouchier C."/>
            <person name="Vandenesch F."/>
            <person name="Kunst F."/>
            <person name="Etienne J."/>
            <person name="Glaser P."/>
            <person name="Buchrieser C."/>
        </authorList>
    </citation>
    <scope>NUCLEOTIDE SEQUENCE [LARGE SCALE GENOMIC DNA]</scope>
    <source>
        <strain>Paris</strain>
    </source>
</reference>
<gene>
    <name type="primary">acyP</name>
    <name type="ordered locus">lpp1853</name>
</gene>
<sequence>MTKELCMRCYISGRVQGVWFRASAKKLAEQLMISGWARNLADGRVEVFACGKEDKLEEFYTWLQKGPLNARVDVCTRENLPWKDYISFDVL</sequence>
<proteinExistence type="inferred from homology"/>
<name>ACYP_LEGPA</name>
<dbReference type="EC" id="3.6.1.7"/>
<dbReference type="EMBL" id="CR628336">
    <property type="protein sequence ID" value="CAH13005.1"/>
    <property type="molecule type" value="Genomic_DNA"/>
</dbReference>
<dbReference type="RefSeq" id="WP_011214133.1">
    <property type="nucleotide sequence ID" value="NC_006368.1"/>
</dbReference>
<dbReference type="SMR" id="Q5X427"/>
<dbReference type="KEGG" id="lpp:lpp1853"/>
<dbReference type="LegioList" id="lpp1853"/>
<dbReference type="HOGENOM" id="CLU_141932_1_0_6"/>
<dbReference type="GO" id="GO:0003998">
    <property type="term" value="F:acylphosphatase activity"/>
    <property type="evidence" value="ECO:0007669"/>
    <property type="project" value="UniProtKB-EC"/>
</dbReference>
<dbReference type="Gene3D" id="3.30.70.100">
    <property type="match status" value="1"/>
</dbReference>
<dbReference type="InterPro" id="IPR020456">
    <property type="entry name" value="Acylphosphatase"/>
</dbReference>
<dbReference type="InterPro" id="IPR001792">
    <property type="entry name" value="Acylphosphatase-like_dom"/>
</dbReference>
<dbReference type="InterPro" id="IPR036046">
    <property type="entry name" value="Acylphosphatase-like_dom_sf"/>
</dbReference>
<dbReference type="InterPro" id="IPR017968">
    <property type="entry name" value="Acylphosphatase_CS"/>
</dbReference>
<dbReference type="NCBIfam" id="NF011022">
    <property type="entry name" value="PRK14451.1"/>
    <property type="match status" value="1"/>
</dbReference>
<dbReference type="PANTHER" id="PTHR47268">
    <property type="entry name" value="ACYLPHOSPHATASE"/>
    <property type="match status" value="1"/>
</dbReference>
<dbReference type="PANTHER" id="PTHR47268:SF4">
    <property type="entry name" value="ACYLPHOSPHATASE"/>
    <property type="match status" value="1"/>
</dbReference>
<dbReference type="Pfam" id="PF00708">
    <property type="entry name" value="Acylphosphatase"/>
    <property type="match status" value="1"/>
</dbReference>
<dbReference type="SUPFAM" id="SSF54975">
    <property type="entry name" value="Acylphosphatase/BLUF domain-like"/>
    <property type="match status" value="1"/>
</dbReference>
<dbReference type="PROSITE" id="PS00150">
    <property type="entry name" value="ACYLPHOSPHATASE_1"/>
    <property type="match status" value="1"/>
</dbReference>
<dbReference type="PROSITE" id="PS00151">
    <property type="entry name" value="ACYLPHOSPHATASE_2"/>
    <property type="match status" value="1"/>
</dbReference>
<dbReference type="PROSITE" id="PS51160">
    <property type="entry name" value="ACYLPHOSPHATASE_3"/>
    <property type="match status" value="1"/>
</dbReference>
<evidence type="ECO:0000255" key="1">
    <source>
        <dbReference type="PROSITE-ProRule" id="PRU00520"/>
    </source>
</evidence>
<evidence type="ECO:0000305" key="2"/>
<feature type="chain" id="PRO_0000326734" description="Acylphosphatase">
    <location>
        <begin position="1"/>
        <end position="91"/>
    </location>
</feature>
<feature type="domain" description="Acylphosphatase-like" evidence="1">
    <location>
        <begin position="6"/>
        <end position="91"/>
    </location>
</feature>
<feature type="active site" evidence="1">
    <location>
        <position position="21"/>
    </location>
</feature>
<feature type="active site" evidence="1">
    <location>
        <position position="39"/>
    </location>
</feature>